<accession>B6JND4</accession>
<feature type="chain" id="PRO_1000140742" description="Small ribosomal subunit protein uS4">
    <location>
        <begin position="1"/>
        <end position="208"/>
    </location>
</feature>
<feature type="domain" description="S4 RNA-binding" evidence="1">
    <location>
        <begin position="98"/>
        <end position="161"/>
    </location>
</feature>
<protein>
    <recommendedName>
        <fullName evidence="1">Small ribosomal subunit protein uS4</fullName>
    </recommendedName>
    <alternativeName>
        <fullName evidence="2">30S ribosomal protein S4</fullName>
    </alternativeName>
</protein>
<reference key="1">
    <citation type="submission" date="2008-10" db="EMBL/GenBank/DDBJ databases">
        <title>The complete genome sequence of Helicobacter pylori strain P12.</title>
        <authorList>
            <person name="Fischer W."/>
            <person name="Windhager L."/>
            <person name="Karnholz A."/>
            <person name="Zeiller M."/>
            <person name="Zimmer R."/>
            <person name="Haas R."/>
        </authorList>
    </citation>
    <scope>NUCLEOTIDE SEQUENCE [LARGE SCALE GENOMIC DNA]</scope>
    <source>
        <strain>P12</strain>
    </source>
</reference>
<proteinExistence type="inferred from homology"/>
<comment type="function">
    <text evidence="1">One of the primary rRNA binding proteins, it binds directly to 16S rRNA where it nucleates assembly of the body of the 30S subunit.</text>
</comment>
<comment type="function">
    <text evidence="1">With S5 and S12 plays an important role in translational accuracy.</text>
</comment>
<comment type="subunit">
    <text evidence="1">Part of the 30S ribosomal subunit. Contacts protein S5. The interaction surface between S4 and S5 is involved in control of translational fidelity.</text>
</comment>
<comment type="similarity">
    <text evidence="1">Belongs to the universal ribosomal protein uS4 family.</text>
</comment>
<sequence length="208" mass="23975">MARYRGAVERLERRFGVSLALKGERRLSGKSALDKRAYGPGQHGQRRAKTSDYGLQLKEKQKAKMMYGISEKQFRSIFVEANRLDGNTGENLIRLIERRLDNVVYRMGFATTRSSARQLVTHGHVLVDGKRLDIPSYFVRSGQKIEIKEKTKSNPQVVRAMELTAQTGIVPWIDVEKDKKYGIFTRYPEREEVVVPIEERLIVELYSK</sequence>
<name>RS4_HELP2</name>
<dbReference type="EMBL" id="CP001217">
    <property type="protein sequence ID" value="ACJ08412.1"/>
    <property type="molecule type" value="Genomic_DNA"/>
</dbReference>
<dbReference type="SMR" id="B6JND4"/>
<dbReference type="KEGG" id="hpp:HPP12_1260"/>
<dbReference type="HOGENOM" id="CLU_092403_0_2_7"/>
<dbReference type="Proteomes" id="UP000008198">
    <property type="component" value="Chromosome"/>
</dbReference>
<dbReference type="GO" id="GO:0015935">
    <property type="term" value="C:small ribosomal subunit"/>
    <property type="evidence" value="ECO:0007669"/>
    <property type="project" value="InterPro"/>
</dbReference>
<dbReference type="GO" id="GO:0019843">
    <property type="term" value="F:rRNA binding"/>
    <property type="evidence" value="ECO:0007669"/>
    <property type="project" value="UniProtKB-UniRule"/>
</dbReference>
<dbReference type="GO" id="GO:0003735">
    <property type="term" value="F:structural constituent of ribosome"/>
    <property type="evidence" value="ECO:0007669"/>
    <property type="project" value="InterPro"/>
</dbReference>
<dbReference type="GO" id="GO:0042274">
    <property type="term" value="P:ribosomal small subunit biogenesis"/>
    <property type="evidence" value="ECO:0007669"/>
    <property type="project" value="TreeGrafter"/>
</dbReference>
<dbReference type="GO" id="GO:0006412">
    <property type="term" value="P:translation"/>
    <property type="evidence" value="ECO:0007669"/>
    <property type="project" value="UniProtKB-UniRule"/>
</dbReference>
<dbReference type="CDD" id="cd00165">
    <property type="entry name" value="S4"/>
    <property type="match status" value="1"/>
</dbReference>
<dbReference type="FunFam" id="1.10.1050.10:FF:000001">
    <property type="entry name" value="30S ribosomal protein S4"/>
    <property type="match status" value="1"/>
</dbReference>
<dbReference type="FunFam" id="3.10.290.10:FF:000001">
    <property type="entry name" value="30S ribosomal protein S4"/>
    <property type="match status" value="1"/>
</dbReference>
<dbReference type="Gene3D" id="1.10.1050.10">
    <property type="entry name" value="Ribosomal Protein S4 Delta 41, Chain A, domain 1"/>
    <property type="match status" value="1"/>
</dbReference>
<dbReference type="Gene3D" id="3.10.290.10">
    <property type="entry name" value="RNA-binding S4 domain"/>
    <property type="match status" value="1"/>
</dbReference>
<dbReference type="HAMAP" id="MF_01306_B">
    <property type="entry name" value="Ribosomal_uS4_B"/>
    <property type="match status" value="1"/>
</dbReference>
<dbReference type="InterPro" id="IPR022801">
    <property type="entry name" value="Ribosomal_uS4"/>
</dbReference>
<dbReference type="InterPro" id="IPR005709">
    <property type="entry name" value="Ribosomal_uS4_bac-type"/>
</dbReference>
<dbReference type="InterPro" id="IPR018079">
    <property type="entry name" value="Ribosomal_uS4_CS"/>
</dbReference>
<dbReference type="InterPro" id="IPR001912">
    <property type="entry name" value="Ribosomal_uS4_N"/>
</dbReference>
<dbReference type="InterPro" id="IPR002942">
    <property type="entry name" value="S4_RNA-bd"/>
</dbReference>
<dbReference type="InterPro" id="IPR036986">
    <property type="entry name" value="S4_RNA-bd_sf"/>
</dbReference>
<dbReference type="NCBIfam" id="NF003717">
    <property type="entry name" value="PRK05327.1"/>
    <property type="match status" value="1"/>
</dbReference>
<dbReference type="NCBIfam" id="TIGR01017">
    <property type="entry name" value="rpsD_bact"/>
    <property type="match status" value="1"/>
</dbReference>
<dbReference type="PANTHER" id="PTHR11831">
    <property type="entry name" value="30S 40S RIBOSOMAL PROTEIN"/>
    <property type="match status" value="1"/>
</dbReference>
<dbReference type="PANTHER" id="PTHR11831:SF4">
    <property type="entry name" value="SMALL RIBOSOMAL SUBUNIT PROTEIN US4M"/>
    <property type="match status" value="1"/>
</dbReference>
<dbReference type="Pfam" id="PF00163">
    <property type="entry name" value="Ribosomal_S4"/>
    <property type="match status" value="1"/>
</dbReference>
<dbReference type="Pfam" id="PF01479">
    <property type="entry name" value="S4"/>
    <property type="match status" value="1"/>
</dbReference>
<dbReference type="SMART" id="SM01390">
    <property type="entry name" value="Ribosomal_S4"/>
    <property type="match status" value="1"/>
</dbReference>
<dbReference type="SMART" id="SM00363">
    <property type="entry name" value="S4"/>
    <property type="match status" value="1"/>
</dbReference>
<dbReference type="SUPFAM" id="SSF55174">
    <property type="entry name" value="Alpha-L RNA-binding motif"/>
    <property type="match status" value="1"/>
</dbReference>
<dbReference type="PROSITE" id="PS00632">
    <property type="entry name" value="RIBOSOMAL_S4"/>
    <property type="match status" value="1"/>
</dbReference>
<dbReference type="PROSITE" id="PS50889">
    <property type="entry name" value="S4"/>
    <property type="match status" value="1"/>
</dbReference>
<gene>
    <name evidence="1" type="primary">rpsD</name>
    <name type="ordered locus">HPP12_1260</name>
</gene>
<organism>
    <name type="scientific">Helicobacter pylori (strain P12)</name>
    <dbReference type="NCBI Taxonomy" id="570508"/>
    <lineage>
        <taxon>Bacteria</taxon>
        <taxon>Pseudomonadati</taxon>
        <taxon>Campylobacterota</taxon>
        <taxon>Epsilonproteobacteria</taxon>
        <taxon>Campylobacterales</taxon>
        <taxon>Helicobacteraceae</taxon>
        <taxon>Helicobacter</taxon>
    </lineage>
</organism>
<keyword id="KW-0687">Ribonucleoprotein</keyword>
<keyword id="KW-0689">Ribosomal protein</keyword>
<keyword id="KW-0694">RNA-binding</keyword>
<keyword id="KW-0699">rRNA-binding</keyword>
<evidence type="ECO:0000255" key="1">
    <source>
        <dbReference type="HAMAP-Rule" id="MF_01306"/>
    </source>
</evidence>
<evidence type="ECO:0000305" key="2"/>